<keyword id="KW-0315">Glutamine amidotransferase</keyword>
<keyword id="KW-0378">Hydrolase</keyword>
<keyword id="KW-0456">Lyase</keyword>
<keyword id="KW-0663">Pyridoxal phosphate</keyword>
<feature type="chain" id="PRO_0000255830" description="Pyridoxal 5'-phosphate synthase subunit PdxT">
    <location>
        <begin position="1"/>
        <end position="201"/>
    </location>
</feature>
<feature type="active site" description="Nucleophile" evidence="1">
    <location>
        <position position="82"/>
    </location>
</feature>
<feature type="active site" description="Charge relay system" evidence="1">
    <location>
        <position position="179"/>
    </location>
</feature>
<feature type="active site" description="Charge relay system" evidence="1">
    <location>
        <position position="181"/>
    </location>
</feature>
<feature type="binding site" evidence="1">
    <location>
        <begin position="50"/>
        <end position="52"/>
    </location>
    <ligand>
        <name>L-glutamine</name>
        <dbReference type="ChEBI" id="CHEBI:58359"/>
    </ligand>
</feature>
<feature type="binding site" evidence="1">
    <location>
        <position position="115"/>
    </location>
    <ligand>
        <name>L-glutamine</name>
        <dbReference type="ChEBI" id="CHEBI:58359"/>
    </ligand>
</feature>
<feature type="binding site" evidence="1">
    <location>
        <begin position="143"/>
        <end position="144"/>
    </location>
    <ligand>
        <name>L-glutamine</name>
        <dbReference type="ChEBI" id="CHEBI:58359"/>
    </ligand>
</feature>
<name>PDXT_DEIGD</name>
<evidence type="ECO:0000255" key="1">
    <source>
        <dbReference type="HAMAP-Rule" id="MF_01615"/>
    </source>
</evidence>
<gene>
    <name evidence="1" type="primary">pdxT</name>
    <name type="ordered locus">Dgeo_1107</name>
</gene>
<comment type="function">
    <text evidence="1">Catalyzes the hydrolysis of glutamine to glutamate and ammonia as part of the biosynthesis of pyridoxal 5'-phosphate. The resulting ammonia molecule is channeled to the active site of PdxS.</text>
</comment>
<comment type="catalytic activity">
    <reaction evidence="1">
        <text>aldehydo-D-ribose 5-phosphate + D-glyceraldehyde 3-phosphate + L-glutamine = pyridoxal 5'-phosphate + L-glutamate + phosphate + 3 H2O + H(+)</text>
        <dbReference type="Rhea" id="RHEA:31507"/>
        <dbReference type="ChEBI" id="CHEBI:15377"/>
        <dbReference type="ChEBI" id="CHEBI:15378"/>
        <dbReference type="ChEBI" id="CHEBI:29985"/>
        <dbReference type="ChEBI" id="CHEBI:43474"/>
        <dbReference type="ChEBI" id="CHEBI:58273"/>
        <dbReference type="ChEBI" id="CHEBI:58359"/>
        <dbReference type="ChEBI" id="CHEBI:59776"/>
        <dbReference type="ChEBI" id="CHEBI:597326"/>
        <dbReference type="EC" id="4.3.3.6"/>
    </reaction>
</comment>
<comment type="catalytic activity">
    <reaction evidence="1">
        <text>L-glutamine + H2O = L-glutamate + NH4(+)</text>
        <dbReference type="Rhea" id="RHEA:15889"/>
        <dbReference type="ChEBI" id="CHEBI:15377"/>
        <dbReference type="ChEBI" id="CHEBI:28938"/>
        <dbReference type="ChEBI" id="CHEBI:29985"/>
        <dbReference type="ChEBI" id="CHEBI:58359"/>
        <dbReference type="EC" id="3.5.1.2"/>
    </reaction>
</comment>
<comment type="pathway">
    <text evidence="1">Cofactor biosynthesis; pyridoxal 5'-phosphate biosynthesis.</text>
</comment>
<comment type="subunit">
    <text evidence="1">In the presence of PdxS, forms a dodecamer of heterodimers. Only shows activity in the heterodimer.</text>
</comment>
<comment type="similarity">
    <text evidence="1">Belongs to the glutaminase PdxT/SNO family.</text>
</comment>
<sequence length="201" mass="21536">MNAVPHLGVLALQGAFREHRQRLEALGVRVTEVRRPGDLAGLQGLILPGGESTTIARLMTDFGLWQPVRDFHAAGGALWGTCAGAILLAREVLGGPPQFGGHQASLALMDLSVRRNAFGRQVDSFRVPLAVRGLAAPFPAVFIRAPVIERVGEGVDVLARHQGQIVLARQGRLLASAFHPELTPDPRLHALFLEMSLTVSA</sequence>
<dbReference type="EC" id="4.3.3.6" evidence="1"/>
<dbReference type="EC" id="3.5.1.2" evidence="1"/>
<dbReference type="EMBL" id="CP000359">
    <property type="protein sequence ID" value="ABF45405.1"/>
    <property type="molecule type" value="Genomic_DNA"/>
</dbReference>
<dbReference type="RefSeq" id="WP_011530242.1">
    <property type="nucleotide sequence ID" value="NC_008025.1"/>
</dbReference>
<dbReference type="SMR" id="Q1IZC9"/>
<dbReference type="STRING" id="319795.Dgeo_1107"/>
<dbReference type="MEROPS" id="C26.A32"/>
<dbReference type="KEGG" id="dge:Dgeo_1107"/>
<dbReference type="eggNOG" id="COG0311">
    <property type="taxonomic scope" value="Bacteria"/>
</dbReference>
<dbReference type="HOGENOM" id="CLU_069674_2_0_0"/>
<dbReference type="UniPathway" id="UPA00245"/>
<dbReference type="Proteomes" id="UP000002431">
    <property type="component" value="Chromosome"/>
</dbReference>
<dbReference type="GO" id="GO:0005829">
    <property type="term" value="C:cytosol"/>
    <property type="evidence" value="ECO:0007669"/>
    <property type="project" value="TreeGrafter"/>
</dbReference>
<dbReference type="GO" id="GO:1903600">
    <property type="term" value="C:glutaminase complex"/>
    <property type="evidence" value="ECO:0007669"/>
    <property type="project" value="TreeGrafter"/>
</dbReference>
<dbReference type="GO" id="GO:0004359">
    <property type="term" value="F:glutaminase activity"/>
    <property type="evidence" value="ECO:0007669"/>
    <property type="project" value="UniProtKB-UniRule"/>
</dbReference>
<dbReference type="GO" id="GO:0036381">
    <property type="term" value="F:pyridoxal 5'-phosphate synthase (glutamine hydrolysing) activity"/>
    <property type="evidence" value="ECO:0007669"/>
    <property type="project" value="UniProtKB-UniRule"/>
</dbReference>
<dbReference type="GO" id="GO:0006543">
    <property type="term" value="P:glutamine catabolic process"/>
    <property type="evidence" value="ECO:0007669"/>
    <property type="project" value="UniProtKB-UniRule"/>
</dbReference>
<dbReference type="GO" id="GO:0042823">
    <property type="term" value="P:pyridoxal phosphate biosynthetic process"/>
    <property type="evidence" value="ECO:0007669"/>
    <property type="project" value="UniProtKB-UniRule"/>
</dbReference>
<dbReference type="GO" id="GO:0008614">
    <property type="term" value="P:pyridoxine metabolic process"/>
    <property type="evidence" value="ECO:0007669"/>
    <property type="project" value="TreeGrafter"/>
</dbReference>
<dbReference type="CDD" id="cd01749">
    <property type="entry name" value="GATase1_PB"/>
    <property type="match status" value="1"/>
</dbReference>
<dbReference type="FunFam" id="3.40.50.880:FF:000010">
    <property type="entry name" value="uncharacterized protein LOC100176842 isoform X2"/>
    <property type="match status" value="1"/>
</dbReference>
<dbReference type="Gene3D" id="3.40.50.880">
    <property type="match status" value="1"/>
</dbReference>
<dbReference type="HAMAP" id="MF_01615">
    <property type="entry name" value="PdxT"/>
    <property type="match status" value="1"/>
</dbReference>
<dbReference type="InterPro" id="IPR029062">
    <property type="entry name" value="Class_I_gatase-like"/>
</dbReference>
<dbReference type="InterPro" id="IPR002161">
    <property type="entry name" value="PdxT/SNO"/>
</dbReference>
<dbReference type="InterPro" id="IPR021196">
    <property type="entry name" value="PdxT/SNO_CS"/>
</dbReference>
<dbReference type="NCBIfam" id="TIGR03800">
    <property type="entry name" value="PLP_synth_Pdx2"/>
    <property type="match status" value="1"/>
</dbReference>
<dbReference type="PANTHER" id="PTHR31559">
    <property type="entry name" value="PYRIDOXAL 5'-PHOSPHATE SYNTHASE SUBUNIT SNO"/>
    <property type="match status" value="1"/>
</dbReference>
<dbReference type="PANTHER" id="PTHR31559:SF0">
    <property type="entry name" value="PYRIDOXAL 5'-PHOSPHATE SYNTHASE SUBUNIT SNO1-RELATED"/>
    <property type="match status" value="1"/>
</dbReference>
<dbReference type="Pfam" id="PF01174">
    <property type="entry name" value="SNO"/>
    <property type="match status" value="1"/>
</dbReference>
<dbReference type="PIRSF" id="PIRSF005639">
    <property type="entry name" value="Glut_amidoT_SNO"/>
    <property type="match status" value="1"/>
</dbReference>
<dbReference type="SUPFAM" id="SSF52317">
    <property type="entry name" value="Class I glutamine amidotransferase-like"/>
    <property type="match status" value="1"/>
</dbReference>
<dbReference type="PROSITE" id="PS01236">
    <property type="entry name" value="PDXT_SNO_1"/>
    <property type="match status" value="1"/>
</dbReference>
<dbReference type="PROSITE" id="PS51130">
    <property type="entry name" value="PDXT_SNO_2"/>
    <property type="match status" value="1"/>
</dbReference>
<protein>
    <recommendedName>
        <fullName evidence="1">Pyridoxal 5'-phosphate synthase subunit PdxT</fullName>
        <ecNumber evidence="1">4.3.3.6</ecNumber>
    </recommendedName>
    <alternativeName>
        <fullName evidence="1">Pdx2</fullName>
    </alternativeName>
    <alternativeName>
        <fullName evidence="1">Pyridoxal 5'-phosphate synthase glutaminase subunit</fullName>
        <ecNumber evidence="1">3.5.1.2</ecNumber>
    </alternativeName>
</protein>
<organism>
    <name type="scientific">Deinococcus geothermalis (strain DSM 11300 / CIP 105573 / AG-3a)</name>
    <dbReference type="NCBI Taxonomy" id="319795"/>
    <lineage>
        <taxon>Bacteria</taxon>
        <taxon>Thermotogati</taxon>
        <taxon>Deinococcota</taxon>
        <taxon>Deinococci</taxon>
        <taxon>Deinococcales</taxon>
        <taxon>Deinococcaceae</taxon>
        <taxon>Deinococcus</taxon>
    </lineage>
</organism>
<accession>Q1IZC9</accession>
<proteinExistence type="inferred from homology"/>
<reference key="1">
    <citation type="submission" date="2006-04" db="EMBL/GenBank/DDBJ databases">
        <title>Complete sequence of chromosome of Deinococcus geothermalis DSM 11300.</title>
        <authorList>
            <person name="Copeland A."/>
            <person name="Lucas S."/>
            <person name="Lapidus A."/>
            <person name="Barry K."/>
            <person name="Detter J.C."/>
            <person name="Glavina del Rio T."/>
            <person name="Hammon N."/>
            <person name="Israni S."/>
            <person name="Dalin E."/>
            <person name="Tice H."/>
            <person name="Pitluck S."/>
            <person name="Brettin T."/>
            <person name="Bruce D."/>
            <person name="Han C."/>
            <person name="Tapia R."/>
            <person name="Saunders E."/>
            <person name="Gilna P."/>
            <person name="Schmutz J."/>
            <person name="Larimer F."/>
            <person name="Land M."/>
            <person name="Hauser L."/>
            <person name="Kyrpides N."/>
            <person name="Kim E."/>
            <person name="Daly M.J."/>
            <person name="Fredrickson J.K."/>
            <person name="Makarova K.S."/>
            <person name="Gaidamakova E.K."/>
            <person name="Zhai M."/>
            <person name="Richardson P."/>
        </authorList>
    </citation>
    <scope>NUCLEOTIDE SEQUENCE [LARGE SCALE GENOMIC DNA]</scope>
    <source>
        <strain>DSM 11300 / CIP 105573 / AG-3a</strain>
    </source>
</reference>